<accession>Q38503</accession>
<evidence type="ECO:0000269" key="1">
    <source>
    </source>
</evidence>
<evidence type="ECO:0000269" key="2">
    <source>
    </source>
</evidence>
<evidence type="ECO:0000269" key="3">
    <source>
    </source>
</evidence>
<evidence type="ECO:0000269" key="4">
    <source>
    </source>
</evidence>
<evidence type="ECO:0000303" key="5">
    <source>
    </source>
</evidence>
<evidence type="ECO:0000305" key="6"/>
<evidence type="ECO:0000312" key="7">
    <source>
        <dbReference type="EMBL" id="ACE96021.1"/>
    </source>
</evidence>
<evidence type="ECO:0000312" key="8">
    <source>
        <dbReference type="EMBL" id="CAA24477.1"/>
    </source>
</evidence>
<evidence type="ECO:0007744" key="9">
    <source>
        <dbReference type="PDB" id="2LE2"/>
    </source>
</evidence>
<evidence type="ECO:0007744" key="10">
    <source>
        <dbReference type="PDB" id="3ZOQ"/>
    </source>
</evidence>
<evidence type="ECO:0007829" key="11">
    <source>
        <dbReference type="PDB" id="2LE2"/>
    </source>
</evidence>
<evidence type="ECO:0007829" key="12">
    <source>
        <dbReference type="PDB" id="3ZOQ"/>
    </source>
</evidence>
<name>P56_BPPH2</name>
<keyword id="KW-0002">3D-structure</keyword>
<keyword id="KW-0244">Early protein</keyword>
<keyword id="KW-0945">Host-virus interaction</keyword>
<keyword id="KW-1185">Reference proteome</keyword>
<dbReference type="EMBL" id="EU771092">
    <property type="protein sequence ID" value="ACE96021.1"/>
    <property type="molecule type" value="Genomic_DNA"/>
</dbReference>
<dbReference type="EMBL" id="V01155">
    <property type="protein sequence ID" value="CAA24477.1"/>
    <property type="molecule type" value="Genomic_DNA"/>
</dbReference>
<dbReference type="RefSeq" id="YP_002004527.1">
    <property type="nucleotide sequence ID" value="NC_011048.1"/>
</dbReference>
<dbReference type="PDB" id="2LE2">
    <property type="method" value="NMR"/>
    <property type="chains" value="A/B=1-56"/>
</dbReference>
<dbReference type="PDB" id="3ZOQ">
    <property type="method" value="X-ray"/>
    <property type="resolution" value="1.45 A"/>
    <property type="chains" value="B/C=1-56"/>
</dbReference>
<dbReference type="PDBsum" id="2LE2"/>
<dbReference type="PDBsum" id="3ZOQ"/>
<dbReference type="SMR" id="Q38503"/>
<dbReference type="GeneID" id="6446503"/>
<dbReference type="KEGG" id="vg:6446503"/>
<dbReference type="EvolutionaryTrace" id="Q38503"/>
<dbReference type="Proteomes" id="UP000001207">
    <property type="component" value="Genome"/>
</dbReference>
<dbReference type="GO" id="GO:0051701">
    <property type="term" value="P:biological process involved in interaction with host"/>
    <property type="evidence" value="ECO:0000353"/>
    <property type="project" value="UniProtKB"/>
</dbReference>
<dbReference type="Gene3D" id="6.20.250.30">
    <property type="match status" value="1"/>
</dbReference>
<dbReference type="InterPro" id="IPR049384">
    <property type="entry name" value="P56"/>
</dbReference>
<dbReference type="InterPro" id="IPR053744">
    <property type="entry name" value="UDG_Inhib_phi29likevirus"/>
</dbReference>
<dbReference type="Pfam" id="PF20763">
    <property type="entry name" value="UDG-inhib_P56"/>
    <property type="match status" value="1"/>
</dbReference>
<organism evidence="8">
    <name type="scientific">Bacillus phage phi29</name>
    <name type="common">Bacteriophage phi-29</name>
    <dbReference type="NCBI Taxonomy" id="2884424"/>
    <lineage>
        <taxon>Viruses</taxon>
        <taxon>Duplodnaviria</taxon>
        <taxon>Heunggongvirae</taxon>
        <taxon>Uroviricota</taxon>
        <taxon>Caudoviricetes</taxon>
        <taxon>Salasmaviridae</taxon>
        <taxon>Picovirinae</taxon>
        <taxon>Salasvirus</taxon>
        <taxon>Salasvirus phi29</taxon>
    </lineage>
</organism>
<protein>
    <recommendedName>
        <fullName evidence="5">Protein p56</fullName>
    </recommendedName>
</protein>
<organismHost>
    <name type="scientific">Bacillus subtilis</name>
    <dbReference type="NCBI Taxonomy" id="1423"/>
</organismHost>
<sequence>MVQNDFVDSYDVTMLLQDDDGKQYYEYHKGLSLSDFEVLYGNTADEIIKLRLDKVL</sequence>
<comment type="function">
    <text evidence="1 2 3">Inhibits the host uracil-DNA glycosylase (UDG), an enzyme which removes uracil residues from DNA by the base excision repair. Interacts with host uracil-DNA glycosylase and prevents the latter from binding to DNA. Since the viral DNA polymerase efficiently incorporates dUMP into DNA, the virus needs to prevent the deleterious effect caused by host UDG when it eliminates uracil residues present in the viral genome.</text>
</comment>
<comment type="subunit">
    <text evidence="1 4">Homodimer (PubMed:17698500, PubMed:21890898). Interacts with host UDG; this interaction inhibits the uracil-DNA glycosylase (PubMed:17698500).</text>
</comment>
<comment type="similarity">
    <text evidence="6">Belongs to the phi29likevirus protein p56 family.</text>
</comment>
<reference key="1">
    <citation type="journal article" date="1982" name="Gene">
        <title>Nucleotide sequence of the major early region of bacteriophage phi 29.</title>
        <authorList>
            <person name="Yoshikawa H."/>
            <person name="Ito J."/>
        </authorList>
    </citation>
    <scope>NUCLEOTIDE SEQUENCE [GENOMIC DNA]</scope>
</reference>
<reference key="2">
    <citation type="submission" date="2008-05" db="EMBL/GenBank/DDBJ databases">
        <authorList>
            <person name="Villegas A.P."/>
            <person name="Lingohr E.J."/>
            <person name="Ceyssens P.-J."/>
            <person name="Kropinski A.M."/>
        </authorList>
    </citation>
    <scope>NUCLEOTIDE SEQUENCE [GENOMIC DNA]</scope>
</reference>
<reference key="3">
    <citation type="journal article" date="2007" name="Nucleic Acids Res.">
        <title>Protein p56 from the Bacillus subtilis phage phi29 inhibits DNA-binding ability of uracil-DNA glycosylase.</title>
        <authorList>
            <person name="Serrano-Heras G."/>
            <person name="Ruiz-Maso J.A."/>
            <person name="del Solar G."/>
            <person name="Espinosa M."/>
            <person name="Bravo A."/>
            <person name="Salas M."/>
        </authorList>
    </citation>
    <scope>FUNCTION</scope>
    <scope>SUBUNIT</scope>
    <scope>INTERACTION WITH BACILLUS SUBTILIS URACIL-DNA GLYCOSYLASE</scope>
</reference>
<reference key="4">
    <citation type="journal article" date="2008" name="Proc. Natl. Acad. Sci. U.S.A.">
        <title>Phage phi29 protein p56 prevents viral DNA replication impairment caused by uracil excision activity of uracil-DNA glycosylase.</title>
        <authorList>
            <person name="Serrano-Heras G."/>
            <person name="Bravo A."/>
            <person name="Salas M."/>
        </authorList>
    </citation>
    <scope>FUNCTION</scope>
</reference>
<reference key="5">
    <citation type="journal article" date="2011" name="Mol. Microbiol.">
        <title>Characterization of Bacillus subtilis uracil-DNA glycosylase and its inhibition by phage phi29 protein p56.</title>
        <authorList>
            <person name="Perez-Lago L."/>
            <person name="Serrano-Heras G."/>
            <person name="Banos B."/>
            <person name="Lazaro J.M."/>
            <person name="Alcorlo M."/>
            <person name="Villar L."/>
            <person name="Salas M."/>
        </authorList>
    </citation>
    <scope>FUNCTION</scope>
</reference>
<reference evidence="9" key="6">
    <citation type="journal article" date="2011" name="Nucleic Acids Res.">
        <title>Novel dimeric structure of phage phi29-encoded protein p56: insights into uracil-DNA glycosylase inhibition.</title>
        <authorList>
            <person name="Asensio J.L."/>
            <person name="Perez-Lago L."/>
            <person name="Lazaro J.M."/>
            <person name="Gonzalez C."/>
            <person name="Serrano-Heras G."/>
            <person name="Salas M."/>
        </authorList>
    </citation>
    <scope>STRUCTURE BY NMR</scope>
    <scope>SUBUNIT</scope>
</reference>
<reference evidence="10" key="7">
    <citation type="journal article" date="2013" name="Nucleic Acids Res.">
        <title>Crystal structure and functional insights into uracil-DNA glycosylase inhibition by phage 29 DNA mimic protein p56.</title>
        <authorList>
            <person name="Banos-Sanz J.I."/>
            <person name="Mojardin L."/>
            <person name="Sanz-Aparicio J."/>
            <person name="Lazaro J.M."/>
            <person name="Villar L."/>
            <person name="Serrano-Heras G."/>
            <person name="Gonzalez B."/>
            <person name="Salas M."/>
        </authorList>
    </citation>
    <scope>X-RAY CRYSTALLOGRAPHY (1.45 ANGSTROMS)</scope>
</reference>
<feature type="chain" id="PRO_0000436073" description="Protein p56">
    <location>
        <begin position="1"/>
        <end position="56"/>
    </location>
</feature>
<feature type="strand" evidence="11">
    <location>
        <begin position="4"/>
        <end position="6"/>
    </location>
</feature>
<feature type="strand" evidence="12">
    <location>
        <begin position="10"/>
        <end position="17"/>
    </location>
</feature>
<feature type="strand" evidence="12">
    <location>
        <begin position="23"/>
        <end position="31"/>
    </location>
</feature>
<feature type="helix" evidence="12">
    <location>
        <begin position="33"/>
        <end position="41"/>
    </location>
</feature>
<feature type="strand" evidence="12">
    <location>
        <begin position="45"/>
        <end position="54"/>
    </location>
</feature>
<proteinExistence type="evidence at protein level"/>
<gene>
    <name evidence="7" type="primary">0.8</name>
</gene>